<proteinExistence type="evidence at transcript level"/>
<reference key="1">
    <citation type="journal article" date="1998" name="DNA Res.">
        <title>Structural analysis of Arabidopsis thaliana chromosome 5. VI. Sequence features of the regions of 1,367,185 bp covered by 19 physically assigned P1 and TAC clones.</title>
        <authorList>
            <person name="Kotani H."/>
            <person name="Nakamura Y."/>
            <person name="Sato S."/>
            <person name="Asamizu E."/>
            <person name="Kaneko T."/>
            <person name="Miyajima N."/>
            <person name="Tabata S."/>
        </authorList>
    </citation>
    <scope>NUCLEOTIDE SEQUENCE [LARGE SCALE GENOMIC DNA]</scope>
    <source>
        <strain>cv. Columbia</strain>
    </source>
</reference>
<reference key="2">
    <citation type="journal article" date="2017" name="Plant J.">
        <title>Araport11: a complete reannotation of the Arabidopsis thaliana reference genome.</title>
        <authorList>
            <person name="Cheng C.Y."/>
            <person name="Krishnakumar V."/>
            <person name="Chan A.P."/>
            <person name="Thibaud-Nissen F."/>
            <person name="Schobel S."/>
            <person name="Town C.D."/>
        </authorList>
    </citation>
    <scope>GENOME REANNOTATION</scope>
    <source>
        <strain>cv. Columbia</strain>
    </source>
</reference>
<reference key="3">
    <citation type="journal article" date="2003" name="Science">
        <title>Empirical analysis of transcriptional activity in the Arabidopsis genome.</title>
        <authorList>
            <person name="Yamada K."/>
            <person name="Lim J."/>
            <person name="Dale J.M."/>
            <person name="Chen H."/>
            <person name="Shinn P."/>
            <person name="Palm C.J."/>
            <person name="Southwick A.M."/>
            <person name="Wu H.C."/>
            <person name="Kim C.J."/>
            <person name="Nguyen M."/>
            <person name="Pham P.K."/>
            <person name="Cheuk R.F."/>
            <person name="Karlin-Newmann G."/>
            <person name="Liu S.X."/>
            <person name="Lam B."/>
            <person name="Sakano H."/>
            <person name="Wu T."/>
            <person name="Yu G."/>
            <person name="Miranda M."/>
            <person name="Quach H.L."/>
            <person name="Tripp M."/>
            <person name="Chang C.H."/>
            <person name="Lee J.M."/>
            <person name="Toriumi M.J."/>
            <person name="Chan M.M."/>
            <person name="Tang C.C."/>
            <person name="Onodera C.S."/>
            <person name="Deng J.M."/>
            <person name="Akiyama K."/>
            <person name="Ansari Y."/>
            <person name="Arakawa T."/>
            <person name="Banh J."/>
            <person name="Banno F."/>
            <person name="Bowser L."/>
            <person name="Brooks S.Y."/>
            <person name="Carninci P."/>
            <person name="Chao Q."/>
            <person name="Choy N."/>
            <person name="Enju A."/>
            <person name="Goldsmith A.D."/>
            <person name="Gurjal M."/>
            <person name="Hansen N.F."/>
            <person name="Hayashizaki Y."/>
            <person name="Johnson-Hopson C."/>
            <person name="Hsuan V.W."/>
            <person name="Iida K."/>
            <person name="Karnes M."/>
            <person name="Khan S."/>
            <person name="Koesema E."/>
            <person name="Ishida J."/>
            <person name="Jiang P.X."/>
            <person name="Jones T."/>
            <person name="Kawai J."/>
            <person name="Kamiya A."/>
            <person name="Meyers C."/>
            <person name="Nakajima M."/>
            <person name="Narusaka M."/>
            <person name="Seki M."/>
            <person name="Sakurai T."/>
            <person name="Satou M."/>
            <person name="Tamse R."/>
            <person name="Vaysberg M."/>
            <person name="Wallender E.K."/>
            <person name="Wong C."/>
            <person name="Yamamura Y."/>
            <person name="Yuan S."/>
            <person name="Shinozaki K."/>
            <person name="Davis R.W."/>
            <person name="Theologis A."/>
            <person name="Ecker J.R."/>
        </authorList>
    </citation>
    <scope>NUCLEOTIDE SEQUENCE [LARGE SCALE MRNA]</scope>
    <source>
        <strain>cv. Columbia</strain>
    </source>
</reference>
<reference key="4">
    <citation type="submission" date="2006-07" db="EMBL/GenBank/DDBJ databases">
        <title>Large-scale analysis of RIKEN Arabidopsis full-length (RAFL) cDNAs.</title>
        <authorList>
            <person name="Totoki Y."/>
            <person name="Seki M."/>
            <person name="Ishida J."/>
            <person name="Nakajima M."/>
            <person name="Enju A."/>
            <person name="Kamiya A."/>
            <person name="Narusaka M."/>
            <person name="Shin-i T."/>
            <person name="Nakagawa M."/>
            <person name="Sakamoto N."/>
            <person name="Oishi K."/>
            <person name="Kohara Y."/>
            <person name="Kobayashi M."/>
            <person name="Toyoda A."/>
            <person name="Sakaki Y."/>
            <person name="Sakurai T."/>
            <person name="Iida K."/>
            <person name="Akiyama K."/>
            <person name="Satou M."/>
            <person name="Toyoda T."/>
            <person name="Konagaya A."/>
            <person name="Carninci P."/>
            <person name="Kawai J."/>
            <person name="Hayashizaki Y."/>
            <person name="Shinozaki K."/>
        </authorList>
    </citation>
    <scope>NUCLEOTIDE SEQUENCE [LARGE SCALE MRNA]</scope>
    <source>
        <strain>cv. Columbia</strain>
    </source>
</reference>
<reference key="5">
    <citation type="journal article" date="2006" name="Photosyn. Res.">
        <title>Plant methionine sulfoxide reductase A and B multigenic families.</title>
        <authorList>
            <person name="Rouhier N."/>
            <person name="Vieira Dos Santos C."/>
            <person name="Tarrago L."/>
            <person name="Rey P."/>
        </authorList>
    </citation>
    <scope>GENE FAMILY</scope>
    <scope>NOMENCLATURE</scope>
</reference>
<comment type="function">
    <text evidence="1">Catalyzes the reduction of methionine sulfoxide (MetSO) to methionine in proteins. Plays a protective role against oxidative stress by restoring activity to proteins that have been inactivated by methionine oxidation. MSRA family specifically reduces the MetSO S-enantiomer (By similarity).</text>
</comment>
<comment type="catalytic activity">
    <reaction>
        <text>L-methionyl-[protein] + [thioredoxin]-disulfide + H2O = L-methionyl-(S)-S-oxide-[protein] + [thioredoxin]-dithiol</text>
        <dbReference type="Rhea" id="RHEA:14217"/>
        <dbReference type="Rhea" id="RHEA-COMP:10698"/>
        <dbReference type="Rhea" id="RHEA-COMP:10700"/>
        <dbReference type="Rhea" id="RHEA-COMP:12313"/>
        <dbReference type="Rhea" id="RHEA-COMP:12315"/>
        <dbReference type="ChEBI" id="CHEBI:15377"/>
        <dbReference type="ChEBI" id="CHEBI:16044"/>
        <dbReference type="ChEBI" id="CHEBI:29950"/>
        <dbReference type="ChEBI" id="CHEBI:44120"/>
        <dbReference type="ChEBI" id="CHEBI:50058"/>
        <dbReference type="EC" id="1.8.4.11"/>
    </reaction>
</comment>
<comment type="catalytic activity">
    <reaction>
        <text>[thioredoxin]-disulfide + L-methionine + H2O = L-methionine (S)-S-oxide + [thioredoxin]-dithiol</text>
        <dbReference type="Rhea" id="RHEA:19993"/>
        <dbReference type="Rhea" id="RHEA-COMP:10698"/>
        <dbReference type="Rhea" id="RHEA-COMP:10700"/>
        <dbReference type="ChEBI" id="CHEBI:15377"/>
        <dbReference type="ChEBI" id="CHEBI:29950"/>
        <dbReference type="ChEBI" id="CHEBI:50058"/>
        <dbReference type="ChEBI" id="CHEBI:57844"/>
        <dbReference type="ChEBI" id="CHEBI:58772"/>
        <dbReference type="EC" id="1.8.4.11"/>
    </reaction>
</comment>
<comment type="subcellular location">
    <subcellularLocation>
        <location evidence="4">Cytoplasm</location>
        <location evidence="4">Cytosol</location>
    </subcellularLocation>
</comment>
<comment type="similarity">
    <text evidence="4">Belongs to the MsrA Met sulfoxide reductase family.</text>
</comment>
<accession>Q9FKF7</accession>
<feature type="chain" id="PRO_0000395511" description="Peptide methionine sulfoxide reductase A1">
    <location>
        <begin position="1"/>
        <end position="202"/>
    </location>
</feature>
<feature type="region of interest" description="Disordered" evidence="3">
    <location>
        <begin position="1"/>
        <end position="20"/>
    </location>
</feature>
<feature type="modified residue" description="Phosphoserine" evidence="2">
    <location>
        <position position="189"/>
    </location>
</feature>
<sequence>MNILNKLGIGSSRQTNMDPSPIAQVIDDEAPAPGNQFTQFGAGCFWSVELAYQRVPGVTQTEVGYSQGITHDPSYKDVCSGTTNHAEIVRVQYDPKECSYQSLLDLFWSKHDPTTLNRQGNDVGTQYRSGIYFYNPEQEKLARESLERHQQQVDRKVVTEILPAKKFYRAEEHHQQYLSKGGRFGLKQSTEKGCNDPIRCYG</sequence>
<name>MSRA1_ARATH</name>
<evidence type="ECO:0000250" key="1"/>
<evidence type="ECO:0000250" key="2">
    <source>
        <dbReference type="UniProtKB" id="Q9LY15"/>
    </source>
</evidence>
<evidence type="ECO:0000256" key="3">
    <source>
        <dbReference type="SAM" id="MobiDB-lite"/>
    </source>
</evidence>
<evidence type="ECO:0000305" key="4"/>
<organism>
    <name type="scientific">Arabidopsis thaliana</name>
    <name type="common">Mouse-ear cress</name>
    <dbReference type="NCBI Taxonomy" id="3702"/>
    <lineage>
        <taxon>Eukaryota</taxon>
        <taxon>Viridiplantae</taxon>
        <taxon>Streptophyta</taxon>
        <taxon>Embryophyta</taxon>
        <taxon>Tracheophyta</taxon>
        <taxon>Spermatophyta</taxon>
        <taxon>Magnoliopsida</taxon>
        <taxon>eudicotyledons</taxon>
        <taxon>Gunneridae</taxon>
        <taxon>Pentapetalae</taxon>
        <taxon>rosids</taxon>
        <taxon>malvids</taxon>
        <taxon>Brassicales</taxon>
        <taxon>Brassicaceae</taxon>
        <taxon>Camelineae</taxon>
        <taxon>Arabidopsis</taxon>
    </lineage>
</organism>
<keyword id="KW-0963">Cytoplasm</keyword>
<keyword id="KW-0560">Oxidoreductase</keyword>
<keyword id="KW-0597">Phosphoprotein</keyword>
<keyword id="KW-1185">Reference proteome</keyword>
<protein>
    <recommendedName>
        <fullName>Peptide methionine sulfoxide reductase A1</fullName>
        <shortName>AtMSRA1</shortName>
        <ecNumber>1.8.4.11</ecNumber>
    </recommendedName>
    <alternativeName>
        <fullName>Peptide-methionine (S)-S-oxide reductase</fullName>
        <shortName>Peptide Met(O) reductase</shortName>
    </alternativeName>
    <alternativeName>
        <fullName>Protein-methionine-S-oxide reductase</fullName>
    </alternativeName>
</protein>
<gene>
    <name type="primary">MSRA1</name>
    <name type="synonym">PMSR1</name>
    <name type="ordered locus">At5g61640</name>
    <name type="ORF">K11J9.18</name>
</gene>
<dbReference type="EC" id="1.8.4.11"/>
<dbReference type="EMBL" id="AB012239">
    <property type="protein sequence ID" value="BAB09008.1"/>
    <property type="molecule type" value="Genomic_DNA"/>
</dbReference>
<dbReference type="EMBL" id="CP002688">
    <property type="protein sequence ID" value="AED97500.1"/>
    <property type="molecule type" value="Genomic_DNA"/>
</dbReference>
<dbReference type="EMBL" id="BT005850">
    <property type="protein sequence ID" value="AAO64785.1"/>
    <property type="molecule type" value="mRNA"/>
</dbReference>
<dbReference type="EMBL" id="AK227434">
    <property type="protein sequence ID" value="BAE99438.1"/>
    <property type="molecule type" value="mRNA"/>
</dbReference>
<dbReference type="RefSeq" id="NP_568937.1">
    <property type="nucleotide sequence ID" value="NM_125558.3"/>
</dbReference>
<dbReference type="SMR" id="Q9FKF7"/>
<dbReference type="BioGRID" id="21530">
    <property type="interactions" value="1"/>
</dbReference>
<dbReference type="FunCoup" id="Q9FKF7">
    <property type="interactions" value="1925"/>
</dbReference>
<dbReference type="STRING" id="3702.Q9FKF7"/>
<dbReference type="PaxDb" id="3702-AT5G61640.1"/>
<dbReference type="ProteomicsDB" id="238915"/>
<dbReference type="EnsemblPlants" id="AT5G61640.1">
    <property type="protein sequence ID" value="AT5G61640.1"/>
    <property type="gene ID" value="AT5G61640"/>
</dbReference>
<dbReference type="GeneID" id="836286"/>
<dbReference type="Gramene" id="AT5G61640.1">
    <property type="protein sequence ID" value="AT5G61640.1"/>
    <property type="gene ID" value="AT5G61640"/>
</dbReference>
<dbReference type="KEGG" id="ath:AT5G61640"/>
<dbReference type="Araport" id="AT5G61640"/>
<dbReference type="TAIR" id="AT5G61640">
    <property type="gene designation" value="PMSR1"/>
</dbReference>
<dbReference type="eggNOG" id="KOG1635">
    <property type="taxonomic scope" value="Eukaryota"/>
</dbReference>
<dbReference type="HOGENOM" id="CLU_031040_3_0_1"/>
<dbReference type="InParanoid" id="Q9FKF7"/>
<dbReference type="OMA" id="ELFWWSR"/>
<dbReference type="PhylomeDB" id="Q9FKF7"/>
<dbReference type="PRO" id="PR:Q9FKF7"/>
<dbReference type="Proteomes" id="UP000006548">
    <property type="component" value="Chromosome 5"/>
</dbReference>
<dbReference type="ExpressionAtlas" id="Q9FKF7">
    <property type="expression patterns" value="baseline and differential"/>
</dbReference>
<dbReference type="GO" id="GO:0005829">
    <property type="term" value="C:cytosol"/>
    <property type="evidence" value="ECO:0007669"/>
    <property type="project" value="UniProtKB-SubCell"/>
</dbReference>
<dbReference type="GO" id="GO:0033744">
    <property type="term" value="F:L-methionine:thioredoxin-disulfide S-oxidoreductase activity"/>
    <property type="evidence" value="ECO:0007669"/>
    <property type="project" value="RHEA"/>
</dbReference>
<dbReference type="GO" id="GO:0008113">
    <property type="term" value="F:peptide-methionine (S)-S-oxide reductase activity"/>
    <property type="evidence" value="ECO:0007669"/>
    <property type="project" value="UniProtKB-EC"/>
</dbReference>
<dbReference type="FunFam" id="3.30.1060.10:FF:000002">
    <property type="entry name" value="Peptide methionine sulfoxide reductase"/>
    <property type="match status" value="1"/>
</dbReference>
<dbReference type="Gene3D" id="3.30.1060.10">
    <property type="entry name" value="Peptide methionine sulphoxide reductase MsrA"/>
    <property type="match status" value="1"/>
</dbReference>
<dbReference type="HAMAP" id="MF_01401">
    <property type="entry name" value="MsrA"/>
    <property type="match status" value="1"/>
</dbReference>
<dbReference type="InterPro" id="IPR002569">
    <property type="entry name" value="Met_Sox_Rdtase_MsrA_dom"/>
</dbReference>
<dbReference type="InterPro" id="IPR036509">
    <property type="entry name" value="Met_Sox_Rdtase_MsrA_sf"/>
</dbReference>
<dbReference type="InterPro" id="IPR050162">
    <property type="entry name" value="MsrA_MetSO_reductase"/>
</dbReference>
<dbReference type="NCBIfam" id="TIGR00401">
    <property type="entry name" value="msrA"/>
    <property type="match status" value="1"/>
</dbReference>
<dbReference type="PANTHER" id="PTHR42799">
    <property type="entry name" value="MITOCHONDRIAL PEPTIDE METHIONINE SULFOXIDE REDUCTASE"/>
    <property type="match status" value="1"/>
</dbReference>
<dbReference type="PANTHER" id="PTHR42799:SF25">
    <property type="entry name" value="PEPTIDE METHIONINE SULFOXIDE REDUCTASE A1"/>
    <property type="match status" value="1"/>
</dbReference>
<dbReference type="Pfam" id="PF01625">
    <property type="entry name" value="PMSR"/>
    <property type="match status" value="1"/>
</dbReference>
<dbReference type="SUPFAM" id="SSF55068">
    <property type="entry name" value="Peptide methionine sulfoxide reductase"/>
    <property type="match status" value="1"/>
</dbReference>